<accession>O93430</accession>
<organism>
    <name type="scientific">Danio rerio</name>
    <name type="common">Zebrafish</name>
    <name type="synonym">Brachydanio rerio</name>
    <dbReference type="NCBI Taxonomy" id="7955"/>
    <lineage>
        <taxon>Eukaryota</taxon>
        <taxon>Metazoa</taxon>
        <taxon>Chordata</taxon>
        <taxon>Craniata</taxon>
        <taxon>Vertebrata</taxon>
        <taxon>Euteleostomi</taxon>
        <taxon>Actinopterygii</taxon>
        <taxon>Neopterygii</taxon>
        <taxon>Teleostei</taxon>
        <taxon>Ostariophysi</taxon>
        <taxon>Cypriniformes</taxon>
        <taxon>Danionidae</taxon>
        <taxon>Danioninae</taxon>
        <taxon>Danio</taxon>
    </lineage>
</organism>
<name>GLRA1_DANRE</name>
<feature type="signal peptide" evidence="3">
    <location>
        <begin position="1"/>
        <end position="24"/>
    </location>
</feature>
<feature type="chain" id="PRO_0000000415" description="Glycine receptor subunit alphaZ1">
    <location>
        <begin position="25"/>
        <end position="444"/>
    </location>
</feature>
<feature type="topological domain" description="Extracellular" evidence="5">
    <location>
        <begin position="25"/>
        <end position="246"/>
    </location>
</feature>
<feature type="transmembrane region" description="Helical; Name=1" evidence="5">
    <location>
        <begin position="247"/>
        <end position="268"/>
    </location>
</feature>
<feature type="topological domain" description="Cytoplasmic" evidence="5">
    <location>
        <begin position="269"/>
        <end position="273"/>
    </location>
</feature>
<feature type="transmembrane region" description="Helical; Name=2" evidence="5">
    <location>
        <begin position="274"/>
        <end position="294"/>
    </location>
</feature>
<feature type="topological domain" description="Extracellular" evidence="5">
    <location>
        <begin position="295"/>
        <end position="305"/>
    </location>
</feature>
<feature type="transmembrane region" description="Helical; Name=3" evidence="5">
    <location>
        <begin position="306"/>
        <end position="326"/>
    </location>
</feature>
<feature type="topological domain" description="Cytoplasmic" evidence="5">
    <location>
        <begin position="327"/>
        <end position="412"/>
    </location>
</feature>
<feature type="transmembrane region" description="Helical; Name=4" evidence="5">
    <location>
        <begin position="413"/>
        <end position="433"/>
    </location>
</feature>
<feature type="topological domain" description="Extracellular" evidence="5">
    <location>
        <begin position="434"/>
        <end position="444"/>
    </location>
</feature>
<feature type="binding site" evidence="1">
    <location>
        <position position="89"/>
    </location>
    <ligand>
        <name>glycine</name>
        <dbReference type="ChEBI" id="CHEBI:57305"/>
        <label>1</label>
        <note>agonist</note>
    </ligand>
</feature>
<feature type="binding site" evidence="1">
    <location>
        <position position="153"/>
    </location>
    <ligand>
        <name>glycine</name>
        <dbReference type="ChEBI" id="CHEBI:57305"/>
        <label>1</label>
        <note>agonist</note>
    </ligand>
</feature>
<feature type="binding site" evidence="1">
    <location>
        <position position="216"/>
    </location>
    <ligand>
        <name>Zn(2+)</name>
        <dbReference type="ChEBI" id="CHEBI:29105"/>
    </ligand>
</feature>
<feature type="binding site" evidence="1">
    <location>
        <position position="218"/>
    </location>
    <ligand>
        <name>Zn(2+)</name>
        <dbReference type="ChEBI" id="CHEBI:29105"/>
    </ligand>
</feature>
<feature type="binding site" evidence="5">
    <location>
        <begin position="226"/>
        <end position="231"/>
    </location>
    <ligand>
        <name>strychnine</name>
        <dbReference type="ChEBI" id="CHEBI:90700"/>
        <note>antagonist</note>
    </ligand>
</feature>
<feature type="binding site" evidence="1">
    <location>
        <position position="228"/>
    </location>
    <ligand>
        <name>glycine</name>
        <dbReference type="ChEBI" id="CHEBI:57305"/>
        <label>2</label>
        <note>agonist; ligand shared with an adjacent GLRB subunit</note>
    </ligand>
</feature>
<feature type="binding site" evidence="1">
    <location>
        <position position="239"/>
    </location>
    <ligand>
        <name>Zn(2+)</name>
        <dbReference type="ChEBI" id="CHEBI:29105"/>
    </ligand>
</feature>
<feature type="site" description="Important for obstruction of the ion pore in the closed conformation" evidence="5">
    <location>
        <position position="285"/>
    </location>
</feature>
<feature type="glycosylation site" description="N-linked (GlcNAc...) asparagine" evidence="3 5">
    <location>
        <position position="62"/>
    </location>
</feature>
<feature type="disulfide bond" evidence="1">
    <location>
        <begin position="162"/>
        <end position="176"/>
    </location>
</feature>
<feature type="disulfide bond" evidence="5">
    <location>
        <begin position="222"/>
        <end position="233"/>
    </location>
</feature>
<feature type="helix" evidence="10">
    <location>
        <begin position="34"/>
        <end position="42"/>
    </location>
</feature>
<feature type="strand" evidence="10">
    <location>
        <begin position="43"/>
        <end position="46"/>
    </location>
</feature>
<feature type="strand" evidence="12">
    <location>
        <begin position="50"/>
        <end position="52"/>
    </location>
</feature>
<feature type="turn" evidence="10">
    <location>
        <begin position="54"/>
        <end position="57"/>
    </location>
</feature>
<feature type="strand" evidence="10">
    <location>
        <begin position="62"/>
        <end position="71"/>
    </location>
</feature>
<feature type="turn" evidence="10">
    <location>
        <begin position="77"/>
        <end position="80"/>
    </location>
</feature>
<feature type="strand" evidence="10">
    <location>
        <begin position="81"/>
        <end position="93"/>
    </location>
</feature>
<feature type="helix" evidence="14">
    <location>
        <begin position="95"/>
        <end position="97"/>
    </location>
</feature>
<feature type="strand" evidence="10">
    <location>
        <begin position="102"/>
        <end position="105"/>
    </location>
</feature>
<feature type="strand" evidence="10">
    <location>
        <begin position="107"/>
        <end position="109"/>
    </location>
</feature>
<feature type="helix" evidence="10">
    <location>
        <begin position="111"/>
        <end position="113"/>
    </location>
</feature>
<feature type="strand" evidence="13">
    <location>
        <begin position="115"/>
        <end position="117"/>
    </location>
</feature>
<feature type="strand" evidence="10">
    <location>
        <begin position="122"/>
        <end position="132"/>
    </location>
</feature>
<feature type="strand" evidence="10">
    <location>
        <begin position="135"/>
        <end position="137"/>
    </location>
</feature>
<feature type="strand" evidence="10">
    <location>
        <begin position="140"/>
        <end position="144"/>
    </location>
</feature>
<feature type="strand" evidence="10">
    <location>
        <begin position="149"/>
        <end position="161"/>
    </location>
</feature>
<feature type="strand" evidence="10">
    <location>
        <begin position="167"/>
        <end position="171"/>
    </location>
</feature>
<feature type="strand" evidence="10">
    <location>
        <begin position="173"/>
        <end position="184"/>
    </location>
</feature>
<feature type="turn" evidence="14">
    <location>
        <begin position="187"/>
        <end position="189"/>
    </location>
</feature>
<feature type="strand" evidence="10">
    <location>
        <begin position="191"/>
        <end position="194"/>
    </location>
</feature>
<feature type="strand" evidence="11">
    <location>
        <begin position="196"/>
        <end position="198"/>
    </location>
</feature>
<feature type="strand" evidence="10">
    <location>
        <begin position="199"/>
        <end position="202"/>
    </location>
</feature>
<feature type="strand" evidence="10">
    <location>
        <begin position="209"/>
        <end position="213"/>
    </location>
</feature>
<feature type="strand" evidence="14">
    <location>
        <begin position="219"/>
        <end position="221"/>
    </location>
</feature>
<feature type="strand" evidence="14">
    <location>
        <begin position="224"/>
        <end position="226"/>
    </location>
</feature>
<feature type="strand" evidence="14">
    <location>
        <begin position="229"/>
        <end position="231"/>
    </location>
</feature>
<feature type="strand" evidence="10">
    <location>
        <begin position="233"/>
        <end position="242"/>
    </location>
</feature>
<feature type="helix" evidence="10">
    <location>
        <begin position="245"/>
        <end position="251"/>
    </location>
</feature>
<feature type="helix" evidence="10">
    <location>
        <begin position="253"/>
        <end position="268"/>
    </location>
</feature>
<feature type="helix" evidence="10">
    <location>
        <begin position="276"/>
        <end position="294"/>
    </location>
</feature>
<feature type="strand" evidence="10">
    <location>
        <begin position="295"/>
        <end position="298"/>
    </location>
</feature>
<feature type="helix" evidence="10">
    <location>
        <begin position="306"/>
        <end position="340"/>
    </location>
</feature>
<feature type="helix" evidence="10">
    <location>
        <begin position="395"/>
        <end position="443"/>
    </location>
</feature>
<comment type="function">
    <text evidence="1 4 5">Subunit of heteromeric glycine-gated chloride channels (PubMed:10188956, PubMed:26344198). Plays an important role in the down-regulation of neuronal excitability. Contributes to the generation of inhibitory postsynaptic currents. Channel activity is potentiated by ethanol (By similarity).</text>
</comment>
<comment type="catalytic activity">
    <reaction evidence="4 5">
        <text>chloride(in) = chloride(out)</text>
        <dbReference type="Rhea" id="RHEA:29823"/>
        <dbReference type="ChEBI" id="CHEBI:17996"/>
    </reaction>
</comment>
<comment type="activity regulation">
    <text evidence="4 5">Activated by glycine and taurine. Inhibited by strychnine (PubMed:10188956, PubMed:26344198). Allosterically activated by ivermectin (PubMed:26344198). Inhibited by picrotoxinin (PubMed:26344198). Strychnine binding locks the channel in a closed conformation and prevents channel opening in response to extracellular glycine (PubMed:26344198). Can also be activated by GABA and inhibited by bicuculline, but this requires heterologous expression in human cells (PubMed:10188956).</text>
</comment>
<comment type="subunit">
    <text evidence="1 5">Homopentamer (in vitro) (PubMed:26344198). Heteropentamer composed of glra1 and glrb (By similarity). Both homopentamers and heteropentamers form functional ion channels (By similarity). Interacts with glrb (By similarity).</text>
</comment>
<comment type="subcellular location">
    <subcellularLocation>
        <location evidence="2">Postsynaptic cell membrane</location>
        <topology evidence="2">Multi-pass membrane protein</topology>
    </subcellularLocation>
    <subcellularLocation>
        <location evidence="2">Synapse</location>
    </subcellularLocation>
    <subcellularLocation>
        <location evidence="2">Perikaryon</location>
    </subcellularLocation>
    <subcellularLocation>
        <location evidence="2">Cell projection</location>
        <location evidence="2">Dendrite</location>
    </subcellularLocation>
    <subcellularLocation>
        <location evidence="4 5">Cell membrane</location>
        <topology evidence="5">Multi-pass membrane protein</topology>
    </subcellularLocation>
</comment>
<comment type="tissue specificity">
    <text evidence="4">Expressed in brain.</text>
</comment>
<comment type="domain">
    <text evidence="5">The channel pore is formed by pentameric assembly of the second transmembrane domain from all five subunits. Channel opening is effected by an outward rotation of the transmembrane domains that increases the diameter of the pore.</text>
</comment>
<comment type="miscellaneous">
    <text evidence="4">Highly sensitive to activation by taurine despite the presence of Val in position 135. In mammals, Val-135 causes a drastic loss of taurine efficacy.</text>
</comment>
<comment type="miscellaneous">
    <text evidence="4 5">The alpha subunit binds strychnine.</text>
</comment>
<comment type="similarity">
    <text evidence="6">Belongs to the ligand-gated ion channel (TC 1.A.9) family. Glycine receptor (TC 1.A.9.3) subfamily. GLRA1 sub-subfamily.</text>
</comment>
<gene>
    <name type="primary">glra1</name>
</gene>
<evidence type="ECO:0000250" key="1">
    <source>
        <dbReference type="UniProtKB" id="P23415"/>
    </source>
</evidence>
<evidence type="ECO:0000250" key="2">
    <source>
        <dbReference type="UniProtKB" id="Q64018"/>
    </source>
</evidence>
<evidence type="ECO:0000255" key="3"/>
<evidence type="ECO:0000269" key="4">
    <source>
    </source>
</evidence>
<evidence type="ECO:0000269" key="5">
    <source>
    </source>
</evidence>
<evidence type="ECO:0000305" key="6"/>
<evidence type="ECO:0007744" key="7">
    <source>
        <dbReference type="PDB" id="3JAD"/>
    </source>
</evidence>
<evidence type="ECO:0007744" key="8">
    <source>
        <dbReference type="PDB" id="3JAE"/>
    </source>
</evidence>
<evidence type="ECO:0007744" key="9">
    <source>
        <dbReference type="PDB" id="3JAF"/>
    </source>
</evidence>
<evidence type="ECO:0007829" key="10">
    <source>
        <dbReference type="PDB" id="7M6N"/>
    </source>
</evidence>
<evidence type="ECO:0007829" key="11">
    <source>
        <dbReference type="PDB" id="7M6O"/>
    </source>
</evidence>
<evidence type="ECO:0007829" key="12">
    <source>
        <dbReference type="PDB" id="7TVI"/>
    </source>
</evidence>
<evidence type="ECO:0007829" key="13">
    <source>
        <dbReference type="PDB" id="7U2M"/>
    </source>
</evidence>
<evidence type="ECO:0007829" key="14">
    <source>
        <dbReference type="PDB" id="7U2N"/>
    </source>
</evidence>
<reference key="1">
    <citation type="journal article" date="1999" name="Neuroscience">
        <title>Cloning, expression and electrophysiological characterization of glycine receptor alpha subunit from zebrafish.</title>
        <authorList>
            <person name="David-Watine B."/>
            <person name="Goblet C."/>
            <person name="de Saint Jan D."/>
            <person name="Fucile S."/>
            <person name="Devignot V."/>
            <person name="Bregestovski P."/>
            <person name="Korn H."/>
        </authorList>
    </citation>
    <scope>NUCLEOTIDE SEQUENCE [MRNA]</scope>
    <scope>FUNCTION</scope>
    <scope>TRANSPORTER ACTIVITY</scope>
    <scope>ACTIVITY REGULATION</scope>
    <scope>SUBCELLULAR LOCATION</scope>
    <scope>TISSUE SPECIFICITY</scope>
    <source>
        <tissue>Brain</tissue>
    </source>
</reference>
<reference evidence="7 8 9" key="2">
    <citation type="journal article" date="2015" name="Nature">
        <title>Glycine receptor mechanism elucidated by electron cryo-microscopy.</title>
        <authorList>
            <person name="Du J."/>
            <person name="Lu W."/>
            <person name="Wu S."/>
            <person name="Cheng Y."/>
            <person name="Gouaux E."/>
        </authorList>
    </citation>
    <scope>STRUCTURE BY ELECTRON MICROSCOPY (3.80 ANGSTROMS) OF 34-434 IN COMPLEXES WITH GLYCINE; IVERMECTINE AND STRYCHNINE</scope>
    <scope>FUNCTION</scope>
    <scope>TRANSPORTER ACTIVITY</scope>
    <scope>ACTIVITY REGULATION</scope>
    <scope>SUBUNIT</scope>
    <scope>SUBCELLULAR LOCATION</scope>
    <scope>TOPOLOGY</scope>
    <scope>DOMAIN</scope>
    <scope>DISULFIDE BONDS</scope>
    <scope>GLYCOSYLATION AT ASN-62</scope>
</reference>
<sequence length="444" mass="50766">MFALGIYLWETIVFFSLAASQQAAARKAASPMPPSEFLDKLMGKVSGYDARIRPNFKGPPVNVTCNIFINSFGSIAETTMDYRVNIFLRQQWNDPRLAYSEYPDDSLDLDPSMLDSIWKPDLFFANEKGANFHEVTTDNKLLRISKNGNVLYSIRITLVLACPMDLKNFPMDVQTCIMQLESFGYTMNDLIFEWDEKGAVQVADGLTLPQFILKEEKDLRYCTKHYNTGKFTCIEARFHLERQMGYYLIQMYIPSLLIVILSWVSFWINMDAAPARVGLGITTVLTMTTQSSGSRASLPKVSYVKAIDIWMAVCLLFVFSALLEYAAVNFIARQHKELLRFQRRRRHLKEDEAGDGRFSFAAYGMGPACLQAKDGMAIKGNNNNAPTSTNPPEKTVEEMRKLFISRAKRIDTVSRVAFPLVFLIFNIFYWITYKIIRSEDIHKQ</sequence>
<keyword id="KW-0002">3D-structure</keyword>
<keyword id="KW-1003">Cell membrane</keyword>
<keyword id="KW-0966">Cell projection</keyword>
<keyword id="KW-0868">Chloride</keyword>
<keyword id="KW-0869">Chloride channel</keyword>
<keyword id="KW-1015">Disulfide bond</keyword>
<keyword id="KW-0325">Glycoprotein</keyword>
<keyword id="KW-0407">Ion channel</keyword>
<keyword id="KW-0406">Ion transport</keyword>
<keyword id="KW-1071">Ligand-gated ion channel</keyword>
<keyword id="KW-0472">Membrane</keyword>
<keyword id="KW-0479">Metal-binding</keyword>
<keyword id="KW-0628">Postsynaptic cell membrane</keyword>
<keyword id="KW-0675">Receptor</keyword>
<keyword id="KW-1185">Reference proteome</keyword>
<keyword id="KW-0732">Signal</keyword>
<keyword id="KW-0770">Synapse</keyword>
<keyword id="KW-0812">Transmembrane</keyword>
<keyword id="KW-1133">Transmembrane helix</keyword>
<keyword id="KW-0813">Transport</keyword>
<keyword id="KW-0862">Zinc</keyword>
<protein>
    <recommendedName>
        <fullName>Glycine receptor subunit alphaZ1</fullName>
    </recommendedName>
</protein>
<proteinExistence type="evidence at protein level"/>
<dbReference type="EMBL" id="AJ005812">
    <property type="protein sequence ID" value="CAA06711.1"/>
    <property type="molecule type" value="mRNA"/>
</dbReference>
<dbReference type="RefSeq" id="NP_571477.1">
    <property type="nucleotide sequence ID" value="NM_131402.1"/>
</dbReference>
<dbReference type="PDB" id="3JAD">
    <property type="method" value="EM"/>
    <property type="resolution" value="3.90 A"/>
    <property type="chains" value="A/B/C/D/E=34-434"/>
</dbReference>
<dbReference type="PDB" id="3JAE">
    <property type="method" value="EM"/>
    <property type="resolution" value="3.90 A"/>
    <property type="chains" value="A/B/C/D/E=34-434"/>
</dbReference>
<dbReference type="PDB" id="3JAF">
    <property type="method" value="EM"/>
    <property type="resolution" value="3.80 A"/>
    <property type="chains" value="A/B/C/D/E=34-434"/>
</dbReference>
<dbReference type="PDB" id="6PLO">
    <property type="method" value="EM"/>
    <property type="resolution" value="3.30 A"/>
    <property type="chains" value="A/B/C/D/E=1-444"/>
</dbReference>
<dbReference type="PDB" id="6PLP">
    <property type="method" value="EM"/>
    <property type="resolution" value="3.30 A"/>
    <property type="chains" value="A/B/C/D/E=1-444"/>
</dbReference>
<dbReference type="PDB" id="6PLQ">
    <property type="method" value="EM"/>
    <property type="resolution" value="3.40 A"/>
    <property type="chains" value="A/B/C/D/E=1-444"/>
</dbReference>
<dbReference type="PDB" id="6PLR">
    <property type="method" value="EM"/>
    <property type="resolution" value="3.20 A"/>
    <property type="chains" value="A/B/C/D/E=1-444"/>
</dbReference>
<dbReference type="PDB" id="6PLS">
    <property type="method" value="EM"/>
    <property type="resolution" value="3.00 A"/>
    <property type="chains" value="A/B/C/D/E=1-444"/>
</dbReference>
<dbReference type="PDB" id="6PLT">
    <property type="method" value="EM"/>
    <property type="resolution" value="3.20 A"/>
    <property type="chains" value="A/B/C/D/E=1-444"/>
</dbReference>
<dbReference type="PDB" id="6PLU">
    <property type="method" value="EM"/>
    <property type="resolution" value="3.30 A"/>
    <property type="chains" value="A/B/C/D/E=1-444"/>
</dbReference>
<dbReference type="PDB" id="6PLV">
    <property type="method" value="EM"/>
    <property type="resolution" value="3.30 A"/>
    <property type="chains" value="A/B/C/D/E=1-444"/>
</dbReference>
<dbReference type="PDB" id="6PLW">
    <property type="method" value="EM"/>
    <property type="resolution" value="3.00 A"/>
    <property type="chains" value="A/B/C/D/E=1-444"/>
</dbReference>
<dbReference type="PDB" id="6PLX">
    <property type="method" value="EM"/>
    <property type="resolution" value="2.90 A"/>
    <property type="chains" value="A/B/C/D/E=1-444"/>
</dbReference>
<dbReference type="PDB" id="6PLY">
    <property type="method" value="EM"/>
    <property type="resolution" value="2.90 A"/>
    <property type="chains" value="A/B/C/D/E=1-444"/>
</dbReference>
<dbReference type="PDB" id="6PLZ">
    <property type="method" value="EM"/>
    <property type="resolution" value="3.00 A"/>
    <property type="chains" value="A/B/C/D/E=1-444"/>
</dbReference>
<dbReference type="PDB" id="6PM0">
    <property type="method" value="EM"/>
    <property type="resolution" value="3.10 A"/>
    <property type="chains" value="A/B/C/D/E=1-444"/>
</dbReference>
<dbReference type="PDB" id="6PM1">
    <property type="method" value="EM"/>
    <property type="resolution" value="3.00 A"/>
    <property type="chains" value="A/B/C/D/E=1-444"/>
</dbReference>
<dbReference type="PDB" id="6PM2">
    <property type="method" value="EM"/>
    <property type="resolution" value="3.00 A"/>
    <property type="chains" value="A/B/C/D/E=1-444"/>
</dbReference>
<dbReference type="PDB" id="6PM3">
    <property type="method" value="EM"/>
    <property type="resolution" value="3.00 A"/>
    <property type="chains" value="A/B/C/D/E=1-444"/>
</dbReference>
<dbReference type="PDB" id="6PM4">
    <property type="method" value="EM"/>
    <property type="resolution" value="4.00 A"/>
    <property type="chains" value="A/B/C/D/E=1-444"/>
</dbReference>
<dbReference type="PDB" id="6PM5">
    <property type="method" value="EM"/>
    <property type="resolution" value="3.10 A"/>
    <property type="chains" value="A/B/C/D/E=1-444"/>
</dbReference>
<dbReference type="PDB" id="6PM6">
    <property type="method" value="EM"/>
    <property type="resolution" value="2.90 A"/>
    <property type="chains" value="A/B/C/D/E=1-444"/>
</dbReference>
<dbReference type="PDB" id="6PXD">
    <property type="method" value="EM"/>
    <property type="resolution" value="2.90 A"/>
    <property type="chains" value="A/B/C/D/E=1-333, A/B/C/D/E=401-434"/>
</dbReference>
<dbReference type="PDB" id="6UBS">
    <property type="method" value="EM"/>
    <property type="resolution" value="3.33 A"/>
    <property type="chains" value="A/B/C/D/E=1-444"/>
</dbReference>
<dbReference type="PDB" id="6UBT">
    <property type="method" value="EM"/>
    <property type="resolution" value="3.55 A"/>
    <property type="chains" value="A/B/C/D/E=1-444"/>
</dbReference>
<dbReference type="PDB" id="6UD3">
    <property type="method" value="EM"/>
    <property type="resolution" value="3.50 A"/>
    <property type="chains" value="A/B/C/D/E=1-444"/>
</dbReference>
<dbReference type="PDB" id="6VM0">
    <property type="method" value="EM"/>
    <property type="resolution" value="3.14 A"/>
    <property type="chains" value="A/B/C/D/E=1-444"/>
</dbReference>
<dbReference type="PDB" id="6VM2">
    <property type="method" value="EM"/>
    <property type="resolution" value="3.34 A"/>
    <property type="chains" value="A/B/C/D/E=1-444"/>
</dbReference>
<dbReference type="PDB" id="6VM3">
    <property type="method" value="EM"/>
    <property type="resolution" value="3.07 A"/>
    <property type="chains" value="A/B/C/D/E=1-444"/>
</dbReference>
<dbReference type="PDB" id="7M6M">
    <property type="method" value="EM"/>
    <property type="resolution" value="3.09 A"/>
    <property type="chains" value="A/B/C/D/E=1-444"/>
</dbReference>
<dbReference type="PDB" id="7M6N">
    <property type="method" value="EM"/>
    <property type="resolution" value="2.61 A"/>
    <property type="chains" value="A/B/C/D/E=1-444"/>
</dbReference>
<dbReference type="PDB" id="7M6O">
    <property type="method" value="EM"/>
    <property type="resolution" value="2.84 A"/>
    <property type="chains" value="A/B/C/D/E=1-444"/>
</dbReference>
<dbReference type="PDB" id="7M6P">
    <property type="method" value="EM"/>
    <property type="resolution" value="3.28 A"/>
    <property type="chains" value="A/B/C/D/E=1-444"/>
</dbReference>
<dbReference type="PDB" id="7M6Q">
    <property type="method" value="EM"/>
    <property type="resolution" value="2.91 A"/>
    <property type="chains" value="A/B/C/D/E=1-444"/>
</dbReference>
<dbReference type="PDB" id="7M6R">
    <property type="method" value="EM"/>
    <property type="resolution" value="3.57 A"/>
    <property type="chains" value="A/B/C/D/E=1-444"/>
</dbReference>
<dbReference type="PDB" id="7M6S">
    <property type="method" value="EM"/>
    <property type="resolution" value="3.61 A"/>
    <property type="chains" value="A/B/C/D/E=1-444"/>
</dbReference>
<dbReference type="PDB" id="7TU9">
    <property type="method" value="EM"/>
    <property type="resolution" value="3.00 A"/>
    <property type="chains" value="A/B/C/D=1-444"/>
</dbReference>
<dbReference type="PDB" id="7TVI">
    <property type="method" value="EM"/>
    <property type="resolution" value="3.20 A"/>
    <property type="chains" value="A/B/C/D=1-444"/>
</dbReference>
<dbReference type="PDB" id="7U2M">
    <property type="method" value="EM"/>
    <property type="resolution" value="2.90 A"/>
    <property type="chains" value="A/B/C/D/E=1-444"/>
</dbReference>
<dbReference type="PDB" id="7U2N">
    <property type="method" value="EM"/>
    <property type="resolution" value="2.80 A"/>
    <property type="chains" value="A/B/C/D/E=1-444"/>
</dbReference>
<dbReference type="PDB" id="7U2O">
    <property type="method" value="EM"/>
    <property type="resolution" value="3.10 A"/>
    <property type="chains" value="A/B/C/D/E=1-436"/>
</dbReference>
<dbReference type="PDB" id="8FE1">
    <property type="method" value="EM"/>
    <property type="resolution" value="3.00 A"/>
    <property type="chains" value="A/B/C/D=1-444"/>
</dbReference>
<dbReference type="PDBsum" id="3JAD"/>
<dbReference type="PDBsum" id="3JAE"/>
<dbReference type="PDBsum" id="3JAF"/>
<dbReference type="PDBsum" id="6PLO"/>
<dbReference type="PDBsum" id="6PLP"/>
<dbReference type="PDBsum" id="6PLQ"/>
<dbReference type="PDBsum" id="6PLR"/>
<dbReference type="PDBsum" id="6PLS"/>
<dbReference type="PDBsum" id="6PLT"/>
<dbReference type="PDBsum" id="6PLU"/>
<dbReference type="PDBsum" id="6PLV"/>
<dbReference type="PDBsum" id="6PLW"/>
<dbReference type="PDBsum" id="6PLX"/>
<dbReference type="PDBsum" id="6PLY"/>
<dbReference type="PDBsum" id="6PLZ"/>
<dbReference type="PDBsum" id="6PM0"/>
<dbReference type="PDBsum" id="6PM1"/>
<dbReference type="PDBsum" id="6PM2"/>
<dbReference type="PDBsum" id="6PM3"/>
<dbReference type="PDBsum" id="6PM4"/>
<dbReference type="PDBsum" id="6PM5"/>
<dbReference type="PDBsum" id="6PM6"/>
<dbReference type="PDBsum" id="6PXD"/>
<dbReference type="PDBsum" id="6UBS"/>
<dbReference type="PDBsum" id="6UBT"/>
<dbReference type="PDBsum" id="6UD3"/>
<dbReference type="PDBsum" id="6VM0"/>
<dbReference type="PDBsum" id="6VM2"/>
<dbReference type="PDBsum" id="6VM3"/>
<dbReference type="PDBsum" id="7M6M"/>
<dbReference type="PDBsum" id="7M6N"/>
<dbReference type="PDBsum" id="7M6O"/>
<dbReference type="PDBsum" id="7M6P"/>
<dbReference type="PDBsum" id="7M6Q"/>
<dbReference type="PDBsum" id="7M6R"/>
<dbReference type="PDBsum" id="7M6S"/>
<dbReference type="PDBsum" id="7TU9"/>
<dbReference type="PDBsum" id="7TVI"/>
<dbReference type="PDBsum" id="7U2M"/>
<dbReference type="PDBsum" id="7U2N"/>
<dbReference type="PDBsum" id="7U2O"/>
<dbReference type="PDBsum" id="8FE1"/>
<dbReference type="BMRB" id="O93430"/>
<dbReference type="EMDB" id="EMD-20370"/>
<dbReference type="EMDB" id="EMD-20371"/>
<dbReference type="EMDB" id="EMD-20372"/>
<dbReference type="EMDB" id="EMD-20373"/>
<dbReference type="EMDB" id="EMD-20374"/>
<dbReference type="EMDB" id="EMD-20375"/>
<dbReference type="EMDB" id="EMD-20376"/>
<dbReference type="EMDB" id="EMD-20377"/>
<dbReference type="EMDB" id="EMD-20378"/>
<dbReference type="EMDB" id="EMD-20379"/>
<dbReference type="EMDB" id="EMD-20380"/>
<dbReference type="EMDB" id="EMD-20381"/>
<dbReference type="EMDB" id="EMD-20382"/>
<dbReference type="EMDB" id="EMD-20383"/>
<dbReference type="EMDB" id="EMD-20384"/>
<dbReference type="EMDB" id="EMD-20385"/>
<dbReference type="EMDB" id="EMD-20386"/>
<dbReference type="EMDB" id="EMD-20388"/>
<dbReference type="EMDB" id="EMD-20389"/>
<dbReference type="EMDB" id="EMD-20518"/>
<dbReference type="EMDB" id="EMD-20714"/>
<dbReference type="EMDB" id="EMD-20715"/>
<dbReference type="EMDB" id="EMD-20731"/>
<dbReference type="EMDB" id="EMD-21234"/>
<dbReference type="EMDB" id="EMD-21236"/>
<dbReference type="EMDB" id="EMD-21237"/>
<dbReference type="EMDB" id="EMD-23700"/>
<dbReference type="EMDB" id="EMD-23701"/>
<dbReference type="EMDB" id="EMD-23702"/>
<dbReference type="EMDB" id="EMD-23703"/>
<dbReference type="EMDB" id="EMD-23704"/>
<dbReference type="EMDB" id="EMD-23705"/>
<dbReference type="EMDB" id="EMD-23706"/>
<dbReference type="EMDB" id="EMD-26130"/>
<dbReference type="EMDB" id="EMD-26141"/>
<dbReference type="EMDB" id="EMD-26315"/>
<dbReference type="EMDB" id="EMD-26316"/>
<dbReference type="EMDB" id="EMD-26317"/>
<dbReference type="EMDB" id="EMD-29019"/>
<dbReference type="SMR" id="O93430"/>
<dbReference type="DIP" id="DIP-61772N"/>
<dbReference type="FunCoup" id="O93430">
    <property type="interactions" value="759"/>
</dbReference>
<dbReference type="STRING" id="7955.ENSDARP00000047679"/>
<dbReference type="GlyCosmos" id="O93430">
    <property type="glycosylation" value="1 site, No reported glycans"/>
</dbReference>
<dbReference type="iPTMnet" id="O93430"/>
<dbReference type="PaxDb" id="7955-ENSDARP00000066196"/>
<dbReference type="Ensembl" id="ENSDART00000005499">
    <property type="protein sequence ID" value="ENSDARP00000003268"/>
    <property type="gene ID" value="ENSDARG00000012019"/>
</dbReference>
<dbReference type="GeneID" id="30676"/>
<dbReference type="KEGG" id="dre:30676"/>
<dbReference type="AGR" id="ZFIN:ZDB-GENE-991117-1"/>
<dbReference type="CTD" id="2741"/>
<dbReference type="ZFIN" id="ZDB-GENE-991117-1">
    <property type="gene designation" value="glra1"/>
</dbReference>
<dbReference type="eggNOG" id="KOG3644">
    <property type="taxonomic scope" value="Eukaryota"/>
</dbReference>
<dbReference type="HOGENOM" id="CLU_010920_1_4_1"/>
<dbReference type="InParanoid" id="O93430"/>
<dbReference type="OrthoDB" id="407674at2759"/>
<dbReference type="PhylomeDB" id="O93430"/>
<dbReference type="Reactome" id="R-DRE-112314">
    <property type="pathway name" value="Neurotransmitter receptors and postsynaptic signal transmission"/>
</dbReference>
<dbReference type="EvolutionaryTrace" id="O93430"/>
<dbReference type="PRO" id="PR:O93430"/>
<dbReference type="Proteomes" id="UP000000437">
    <property type="component" value="Chromosome 14"/>
</dbReference>
<dbReference type="Bgee" id="ENSDARG00000012019">
    <property type="expression patterns" value="Expressed in brain and 9 other cell types or tissues"/>
</dbReference>
<dbReference type="ExpressionAtlas" id="O93430">
    <property type="expression patterns" value="baseline"/>
</dbReference>
<dbReference type="GO" id="GO:0034707">
    <property type="term" value="C:chloride channel complex"/>
    <property type="evidence" value="ECO:0007669"/>
    <property type="project" value="UniProtKB-KW"/>
</dbReference>
<dbReference type="GO" id="GO:0030425">
    <property type="term" value="C:dendrite"/>
    <property type="evidence" value="ECO:0007669"/>
    <property type="project" value="UniProtKB-SubCell"/>
</dbReference>
<dbReference type="GO" id="GO:0016020">
    <property type="term" value="C:membrane"/>
    <property type="evidence" value="ECO:0000314"/>
    <property type="project" value="ZFIN"/>
</dbReference>
<dbReference type="GO" id="GO:0043204">
    <property type="term" value="C:perikaryon"/>
    <property type="evidence" value="ECO:0007669"/>
    <property type="project" value="UniProtKB-SubCell"/>
</dbReference>
<dbReference type="GO" id="GO:0005886">
    <property type="term" value="C:plasma membrane"/>
    <property type="evidence" value="ECO:0000250"/>
    <property type="project" value="UniProtKB"/>
</dbReference>
<dbReference type="GO" id="GO:0045211">
    <property type="term" value="C:postsynaptic membrane"/>
    <property type="evidence" value="ECO:0007669"/>
    <property type="project" value="UniProtKB-SubCell"/>
</dbReference>
<dbReference type="GO" id="GO:0016934">
    <property type="term" value="F:extracellularly glycine-gated chloride channel activity"/>
    <property type="evidence" value="ECO:0000314"/>
    <property type="project" value="ZFIN"/>
</dbReference>
<dbReference type="GO" id="GO:0016933">
    <property type="term" value="F:extracellularly glycine-gated ion channel activity"/>
    <property type="evidence" value="ECO:0000314"/>
    <property type="project" value="ZFIN"/>
</dbReference>
<dbReference type="GO" id="GO:0016594">
    <property type="term" value="F:glycine binding"/>
    <property type="evidence" value="ECO:0000314"/>
    <property type="project" value="ZFIN"/>
</dbReference>
<dbReference type="GO" id="GO:0015276">
    <property type="term" value="F:ligand-gated monoatomic ion channel activity"/>
    <property type="evidence" value="ECO:0000314"/>
    <property type="project" value="ZFIN"/>
</dbReference>
<dbReference type="GO" id="GO:0004888">
    <property type="term" value="F:transmembrane signaling receptor activity"/>
    <property type="evidence" value="ECO:0007669"/>
    <property type="project" value="InterPro"/>
</dbReference>
<dbReference type="GO" id="GO:0022824">
    <property type="term" value="F:transmitter-gated monoatomic ion channel activity"/>
    <property type="evidence" value="ECO:0007669"/>
    <property type="project" value="InterPro"/>
</dbReference>
<dbReference type="GO" id="GO:0008270">
    <property type="term" value="F:zinc ion binding"/>
    <property type="evidence" value="ECO:0000250"/>
    <property type="project" value="UniProtKB"/>
</dbReference>
<dbReference type="GO" id="GO:0071230">
    <property type="term" value="P:cellular response to amino acid stimulus"/>
    <property type="evidence" value="ECO:0000250"/>
    <property type="project" value="UniProtKB"/>
</dbReference>
<dbReference type="GO" id="GO:0071361">
    <property type="term" value="P:cellular response to ethanol"/>
    <property type="evidence" value="ECO:0000250"/>
    <property type="project" value="UniProtKB"/>
</dbReference>
<dbReference type="GO" id="GO:0071294">
    <property type="term" value="P:cellular response to zinc ion"/>
    <property type="evidence" value="ECO:0000250"/>
    <property type="project" value="UniProtKB"/>
</dbReference>
<dbReference type="GO" id="GO:0007417">
    <property type="term" value="P:central nervous system development"/>
    <property type="evidence" value="ECO:0000315"/>
    <property type="project" value="ZFIN"/>
</dbReference>
<dbReference type="GO" id="GO:1902476">
    <property type="term" value="P:chloride transmembrane transport"/>
    <property type="evidence" value="ECO:0000318"/>
    <property type="project" value="GO_Central"/>
</dbReference>
<dbReference type="GO" id="GO:0006811">
    <property type="term" value="P:monoatomic ion transport"/>
    <property type="evidence" value="ECO:0000314"/>
    <property type="project" value="ZFIN"/>
</dbReference>
<dbReference type="GO" id="GO:0045664">
    <property type="term" value="P:regulation of neuron differentiation"/>
    <property type="evidence" value="ECO:0000315"/>
    <property type="project" value="ZFIN"/>
</dbReference>
<dbReference type="GO" id="GO:0043200">
    <property type="term" value="P:response to amino acid"/>
    <property type="evidence" value="ECO:0000314"/>
    <property type="project" value="ZFIN"/>
</dbReference>
<dbReference type="CDD" id="cd19009">
    <property type="entry name" value="LGIC_ECD_GlyR_alpha"/>
    <property type="match status" value="1"/>
</dbReference>
<dbReference type="CDD" id="cd19060">
    <property type="entry name" value="LGIC_TM_GlyR_alpha"/>
    <property type="match status" value="1"/>
</dbReference>
<dbReference type="FunFam" id="2.70.170.10:FF:000002">
    <property type="entry name" value="Glycine receptor alpha 1 subunit"/>
    <property type="match status" value="1"/>
</dbReference>
<dbReference type="FunFam" id="1.20.58.390:FF:000003">
    <property type="entry name" value="Glycine receptor alpha 2 subunit"/>
    <property type="match status" value="1"/>
</dbReference>
<dbReference type="Gene3D" id="2.70.170.10">
    <property type="entry name" value="Neurotransmitter-gated ion-channel ligand-binding domain"/>
    <property type="match status" value="1"/>
</dbReference>
<dbReference type="Gene3D" id="1.20.58.390">
    <property type="entry name" value="Neurotransmitter-gated ion-channel transmembrane domain"/>
    <property type="match status" value="1"/>
</dbReference>
<dbReference type="InterPro" id="IPR006028">
    <property type="entry name" value="GABAA/Glycine_rcpt"/>
</dbReference>
<dbReference type="InterPro" id="IPR008127">
    <property type="entry name" value="Glycine_rcpt_A"/>
</dbReference>
<dbReference type="InterPro" id="IPR008128">
    <property type="entry name" value="Glycine_rcpt_A1"/>
</dbReference>
<dbReference type="InterPro" id="IPR006202">
    <property type="entry name" value="Neur_chan_lig-bd"/>
</dbReference>
<dbReference type="InterPro" id="IPR036734">
    <property type="entry name" value="Neur_chan_lig-bd_sf"/>
</dbReference>
<dbReference type="InterPro" id="IPR006201">
    <property type="entry name" value="Neur_channel"/>
</dbReference>
<dbReference type="InterPro" id="IPR036719">
    <property type="entry name" value="Neuro-gated_channel_TM_sf"/>
</dbReference>
<dbReference type="InterPro" id="IPR038050">
    <property type="entry name" value="Neuro_actylchol_rec"/>
</dbReference>
<dbReference type="InterPro" id="IPR006029">
    <property type="entry name" value="Neurotrans-gated_channel_TM"/>
</dbReference>
<dbReference type="InterPro" id="IPR018000">
    <property type="entry name" value="Neurotransmitter_ion_chnl_CS"/>
</dbReference>
<dbReference type="NCBIfam" id="TIGR00860">
    <property type="entry name" value="LIC"/>
    <property type="match status" value="1"/>
</dbReference>
<dbReference type="PANTHER" id="PTHR18945">
    <property type="entry name" value="NEUROTRANSMITTER GATED ION CHANNEL"/>
    <property type="match status" value="1"/>
</dbReference>
<dbReference type="Pfam" id="PF02931">
    <property type="entry name" value="Neur_chan_LBD"/>
    <property type="match status" value="1"/>
</dbReference>
<dbReference type="Pfam" id="PF02932">
    <property type="entry name" value="Neur_chan_memb"/>
    <property type="match status" value="1"/>
</dbReference>
<dbReference type="PRINTS" id="PR00253">
    <property type="entry name" value="GABAARECEPTR"/>
</dbReference>
<dbReference type="PRINTS" id="PR01673">
    <property type="entry name" value="GLYRALPHA"/>
</dbReference>
<dbReference type="PRINTS" id="PR01674">
    <property type="entry name" value="GLYRALPHA1"/>
</dbReference>
<dbReference type="PRINTS" id="PR00252">
    <property type="entry name" value="NRIONCHANNEL"/>
</dbReference>
<dbReference type="SUPFAM" id="SSF90112">
    <property type="entry name" value="Neurotransmitter-gated ion-channel transmembrane pore"/>
    <property type="match status" value="1"/>
</dbReference>
<dbReference type="SUPFAM" id="SSF63712">
    <property type="entry name" value="Nicotinic receptor ligand binding domain-like"/>
    <property type="match status" value="1"/>
</dbReference>
<dbReference type="PROSITE" id="PS00236">
    <property type="entry name" value="NEUROTR_ION_CHANNEL"/>
    <property type="match status" value="1"/>
</dbReference>